<sequence>MLRSKTFLKKTRAGGVVKIVREHYLRDDIGCGAPACSACGGAHAGPALELQPRDQASSLCPWPHYLLPDTNVLLHQIDVLEHPAIRNVIVLQTVMQEVRNRSAPIYKRIRDVTNNQEKHFYTFTNEHHKETYIEQEQGENANDRNDRAIRVAAKWYNEHLKRVAADSQLQVILITNDRKNKEKAVQEGIPAFTCEEYVKSLTANPELIDRLAYLSDEMNEIESGKIIFSEHLPLSKLQQGIKSGSYLQGTFRASRENYLEATVWIHGDKEEEKEILIQGIKHLNRAVHEDIVAVELLPRSQWVAPSSVVLDDEGQNEDDVEKDEERELLLKTAVSEKMLRPTGRVVGIIKRNWRPYCGMLSKSDIKESRRHLFTPADKRIPRIRIETRQASALEGRRIIVAIDGWPRNSRYPNGHFVKNLGDVGEKETETEVLLLEHDVPHQPFSQAVLSFLPRMPWSITEEDMKNREDLRHLCVCSVDPPGCTDIDDALHCRELSNGNLEVGVHIADVSHFIRPGNALDQESARRGTTVYLCEKRIDMVPELLSSNLCSLRSNVDRLAFSCIWEMNHNAEILKTRFTKSVINSKASLTYAEAQMRIDSAAMNDDITTSLRGLNQLAKILKKGRIEKGALTLSSPEIRFHMDSETHDPIDLQTKELRETNSMVEEFMLLANISVAKKIHEEFSEHALLRKHPAPPPSNYDILVKAAKSKNLQIKTDTAKSLADSLDRAESPDFPYLNTLLRILATRCMMQAVYFCSGMDNDFHHYGLASPIYTHFTSPIRRYADIIVHRLLAVAIGADCTYPELTDKHKLSDICKNLNFRHKMAQYAQRASVAFHTQLFFKSKGIVSEEAYILFVRKNAIVVLIPKYGLEGTVFFEEKDKPKPRLAYDDEIPSLRIEGTVFHVFDKVKVKITLDSSNLQHQKIRMALVEPQIPGINIPPNVADKALTAPGGKKRKLEK</sequence>
<name>RRP44_MOUSE</name>
<dbReference type="EC" id="3.1.13.-"/>
<dbReference type="EC" id="3.1.26.-"/>
<dbReference type="EMBL" id="AK012840">
    <property type="protein sequence ID" value="BAB28503.3"/>
    <property type="molecule type" value="mRNA"/>
</dbReference>
<dbReference type="EMBL" id="AK032091">
    <property type="protein sequence ID" value="BAC27692.1"/>
    <property type="molecule type" value="mRNA"/>
</dbReference>
<dbReference type="EMBL" id="AK129259">
    <property type="protein sequence ID" value="BAC98069.1"/>
    <property type="status" value="ALT_SEQ"/>
    <property type="molecule type" value="Transcribed_RNA"/>
</dbReference>
<dbReference type="CCDS" id="CCDS49555.1"/>
<dbReference type="RefSeq" id="NP_082591.2">
    <property type="nucleotide sequence ID" value="NM_028315.2"/>
</dbReference>
<dbReference type="SMR" id="Q9CSH3"/>
<dbReference type="BioGRID" id="215499">
    <property type="interactions" value="16"/>
</dbReference>
<dbReference type="ComplexPortal" id="CPX-594">
    <property type="entry name" value="Nuclear exosome complex, Dis3-Exosc10 variant"/>
</dbReference>
<dbReference type="ComplexPortal" id="CPX-598">
    <property type="entry name" value="Exosome complex, Dis3 variant"/>
</dbReference>
<dbReference type="FunCoup" id="Q9CSH3">
    <property type="interactions" value="4101"/>
</dbReference>
<dbReference type="IntAct" id="Q9CSH3">
    <property type="interactions" value="2"/>
</dbReference>
<dbReference type="MINT" id="Q9CSH3"/>
<dbReference type="STRING" id="10090.ENSMUSP00000041906"/>
<dbReference type="GlyGen" id="Q9CSH3">
    <property type="glycosylation" value="2 sites, 1 O-linked glycan (2 sites)"/>
</dbReference>
<dbReference type="iPTMnet" id="Q9CSH3"/>
<dbReference type="PhosphoSitePlus" id="Q9CSH3"/>
<dbReference type="SwissPalm" id="Q9CSH3"/>
<dbReference type="PaxDb" id="10090-ENSMUSP00000041906"/>
<dbReference type="PeptideAtlas" id="Q9CSH3"/>
<dbReference type="ProteomicsDB" id="260843"/>
<dbReference type="Pumba" id="Q9CSH3"/>
<dbReference type="Antibodypedia" id="24401">
    <property type="antibodies" value="225 antibodies from 30 providers"/>
</dbReference>
<dbReference type="DNASU" id="72662"/>
<dbReference type="Ensembl" id="ENSMUST00000042471.11">
    <property type="protein sequence ID" value="ENSMUSP00000041906.10"/>
    <property type="gene ID" value="ENSMUSG00000033166.12"/>
</dbReference>
<dbReference type="GeneID" id="72662"/>
<dbReference type="KEGG" id="mmu:72662"/>
<dbReference type="UCSC" id="uc007uuw.1">
    <property type="organism name" value="mouse"/>
</dbReference>
<dbReference type="AGR" id="MGI:1919912"/>
<dbReference type="CTD" id="22894"/>
<dbReference type="MGI" id="MGI:1919912">
    <property type="gene designation" value="Dis3"/>
</dbReference>
<dbReference type="VEuPathDB" id="HostDB:ENSMUSG00000033166"/>
<dbReference type="eggNOG" id="KOG2102">
    <property type="taxonomic scope" value="Eukaryota"/>
</dbReference>
<dbReference type="GeneTree" id="ENSGT00530000063106"/>
<dbReference type="HOGENOM" id="CLU_002333_5_0_1"/>
<dbReference type="InParanoid" id="Q9CSH3"/>
<dbReference type="OMA" id="GQVMRNN"/>
<dbReference type="OrthoDB" id="372421at2759"/>
<dbReference type="PhylomeDB" id="Q9CSH3"/>
<dbReference type="TreeFam" id="TF105755"/>
<dbReference type="Reactome" id="R-MMU-429958">
    <property type="pathway name" value="mRNA decay by 3' to 5' exoribonuclease"/>
</dbReference>
<dbReference type="Reactome" id="R-MMU-450385">
    <property type="pathway name" value="Butyrate Response Factor 1 (BRF1) binds and destabilizes mRNA"/>
</dbReference>
<dbReference type="Reactome" id="R-MMU-450513">
    <property type="pathway name" value="Tristetraprolin (TTP, ZFP36) binds and destabilizes mRNA"/>
</dbReference>
<dbReference type="Reactome" id="R-MMU-450604">
    <property type="pathway name" value="KSRP (KHSRP) binds and destabilizes mRNA"/>
</dbReference>
<dbReference type="Reactome" id="R-MMU-6791226">
    <property type="pathway name" value="Major pathway of rRNA processing in the nucleolus and cytosol"/>
</dbReference>
<dbReference type="BioGRID-ORCS" id="72662">
    <property type="hits" value="28 hits in 82 CRISPR screens"/>
</dbReference>
<dbReference type="ChiTaRS" id="Dis3">
    <property type="organism name" value="mouse"/>
</dbReference>
<dbReference type="PRO" id="PR:Q9CSH3"/>
<dbReference type="Proteomes" id="UP000000589">
    <property type="component" value="Chromosome 14"/>
</dbReference>
<dbReference type="RNAct" id="Q9CSH3">
    <property type="molecule type" value="protein"/>
</dbReference>
<dbReference type="Bgee" id="ENSMUSG00000033166">
    <property type="expression patterns" value="Expressed in primitive streak and 236 other cell types or tissues"/>
</dbReference>
<dbReference type="ExpressionAtlas" id="Q9CSH3">
    <property type="expression patterns" value="baseline and differential"/>
</dbReference>
<dbReference type="GO" id="GO:0005829">
    <property type="term" value="C:cytosol"/>
    <property type="evidence" value="ECO:0000266"/>
    <property type="project" value="ComplexPortal"/>
</dbReference>
<dbReference type="GO" id="GO:0000178">
    <property type="term" value="C:exosome (RNase complex)"/>
    <property type="evidence" value="ECO:0000303"/>
    <property type="project" value="ComplexPortal"/>
</dbReference>
<dbReference type="GO" id="GO:0000176">
    <property type="term" value="C:nuclear exosome (RNase complex)"/>
    <property type="evidence" value="ECO:0000250"/>
    <property type="project" value="UniProtKB"/>
</dbReference>
<dbReference type="GO" id="GO:0005730">
    <property type="term" value="C:nucleolus"/>
    <property type="evidence" value="ECO:0007669"/>
    <property type="project" value="UniProtKB-SubCell"/>
</dbReference>
<dbReference type="GO" id="GO:0005654">
    <property type="term" value="C:nucleoplasm"/>
    <property type="evidence" value="ECO:0000250"/>
    <property type="project" value="UniProtKB"/>
</dbReference>
<dbReference type="GO" id="GO:0005634">
    <property type="term" value="C:nucleus"/>
    <property type="evidence" value="ECO:0000266"/>
    <property type="project" value="ComplexPortal"/>
</dbReference>
<dbReference type="GO" id="GO:0000175">
    <property type="term" value="F:3'-5'-RNA exonuclease activity"/>
    <property type="evidence" value="ECO:0000250"/>
    <property type="project" value="UniProtKB"/>
</dbReference>
<dbReference type="GO" id="GO:0004519">
    <property type="term" value="F:endonuclease activity"/>
    <property type="evidence" value="ECO:0000250"/>
    <property type="project" value="UniProtKB"/>
</dbReference>
<dbReference type="GO" id="GO:0005085">
    <property type="term" value="F:guanyl-nucleotide exchange factor activity"/>
    <property type="evidence" value="ECO:0007669"/>
    <property type="project" value="Ensembl"/>
</dbReference>
<dbReference type="GO" id="GO:0003723">
    <property type="term" value="F:RNA binding"/>
    <property type="evidence" value="ECO:0007669"/>
    <property type="project" value="UniProtKB-KW"/>
</dbReference>
<dbReference type="GO" id="GO:0071034">
    <property type="term" value="P:CUT catabolic process"/>
    <property type="evidence" value="ECO:0007669"/>
    <property type="project" value="Ensembl"/>
</dbReference>
<dbReference type="GO" id="GO:0006401">
    <property type="term" value="P:RNA catabolic process"/>
    <property type="evidence" value="ECO:0000266"/>
    <property type="project" value="ComplexPortal"/>
</dbReference>
<dbReference type="GO" id="GO:0006396">
    <property type="term" value="P:RNA processing"/>
    <property type="evidence" value="ECO:0000266"/>
    <property type="project" value="ComplexPortal"/>
</dbReference>
<dbReference type="GO" id="GO:0016075">
    <property type="term" value="P:rRNA catabolic process"/>
    <property type="evidence" value="ECO:0007669"/>
    <property type="project" value="Ensembl"/>
</dbReference>
<dbReference type="GO" id="GO:0006364">
    <property type="term" value="P:rRNA processing"/>
    <property type="evidence" value="ECO:0007669"/>
    <property type="project" value="UniProtKB-KW"/>
</dbReference>
<dbReference type="CDD" id="cd09862">
    <property type="entry name" value="PIN_Rrp44-like"/>
    <property type="match status" value="1"/>
</dbReference>
<dbReference type="FunFam" id="3.40.50.1010:FF:000010">
    <property type="entry name" value="Exosome complex exonuclease DIS3"/>
    <property type="match status" value="1"/>
</dbReference>
<dbReference type="FunFam" id="2.40.50.700:FF:000001">
    <property type="entry name" value="Exosome complex exonuclease exoribonuclease (Rrp44)"/>
    <property type="match status" value="1"/>
</dbReference>
<dbReference type="FunFam" id="2.40.50.140:FF:000125">
    <property type="entry name" value="exosome complex exonuclease RRP44 isoform X1"/>
    <property type="match status" value="1"/>
</dbReference>
<dbReference type="FunFam" id="2.40.50.690:FF:000002">
    <property type="entry name" value="exosome complex exonuclease RRP44 isoform X1"/>
    <property type="match status" value="1"/>
</dbReference>
<dbReference type="Gene3D" id="2.40.50.690">
    <property type="match status" value="1"/>
</dbReference>
<dbReference type="Gene3D" id="2.40.50.700">
    <property type="match status" value="1"/>
</dbReference>
<dbReference type="Gene3D" id="3.40.50.1010">
    <property type="entry name" value="5'-nuclease"/>
    <property type="match status" value="1"/>
</dbReference>
<dbReference type="Gene3D" id="2.40.50.140">
    <property type="entry name" value="Nucleic acid-binding proteins"/>
    <property type="match status" value="1"/>
</dbReference>
<dbReference type="InterPro" id="IPR041505">
    <property type="entry name" value="Dis3_CSD2"/>
</dbReference>
<dbReference type="InterPro" id="IPR012340">
    <property type="entry name" value="NA-bd_OB-fold"/>
</dbReference>
<dbReference type="InterPro" id="IPR029060">
    <property type="entry name" value="PIN-like_dom_sf"/>
</dbReference>
<dbReference type="InterPro" id="IPR002716">
    <property type="entry name" value="PIN_dom"/>
</dbReference>
<dbReference type="InterPro" id="IPR001900">
    <property type="entry name" value="RNase_II/R"/>
</dbReference>
<dbReference type="InterPro" id="IPR022966">
    <property type="entry name" value="RNase_II/R_CS"/>
</dbReference>
<dbReference type="InterPro" id="IPR050180">
    <property type="entry name" value="RNR_Ribonuclease"/>
</dbReference>
<dbReference type="InterPro" id="IPR033771">
    <property type="entry name" value="Rrp44_CSD1"/>
</dbReference>
<dbReference type="InterPro" id="IPR033770">
    <property type="entry name" value="RRP44_S1"/>
</dbReference>
<dbReference type="PANTHER" id="PTHR23355:SF35">
    <property type="entry name" value="EXOSOME COMPLEX EXONUCLEASE RRP44"/>
    <property type="match status" value="1"/>
</dbReference>
<dbReference type="PANTHER" id="PTHR23355">
    <property type="entry name" value="RIBONUCLEASE"/>
    <property type="match status" value="1"/>
</dbReference>
<dbReference type="Pfam" id="PF17849">
    <property type="entry name" value="OB_Dis3"/>
    <property type="match status" value="1"/>
</dbReference>
<dbReference type="Pfam" id="PF13638">
    <property type="entry name" value="PIN_4"/>
    <property type="match status" value="1"/>
</dbReference>
<dbReference type="Pfam" id="PF00773">
    <property type="entry name" value="RNB"/>
    <property type="match status" value="1"/>
</dbReference>
<dbReference type="Pfam" id="PF17216">
    <property type="entry name" value="Rrp44_CSD1"/>
    <property type="match status" value="1"/>
</dbReference>
<dbReference type="Pfam" id="PF17215">
    <property type="entry name" value="Rrp44_S1"/>
    <property type="match status" value="1"/>
</dbReference>
<dbReference type="SMART" id="SM00670">
    <property type="entry name" value="PINc"/>
    <property type="match status" value="1"/>
</dbReference>
<dbReference type="SMART" id="SM00955">
    <property type="entry name" value="RNB"/>
    <property type="match status" value="1"/>
</dbReference>
<dbReference type="SUPFAM" id="SSF50249">
    <property type="entry name" value="Nucleic acid-binding proteins"/>
    <property type="match status" value="3"/>
</dbReference>
<dbReference type="SUPFAM" id="SSF88723">
    <property type="entry name" value="PIN domain-like"/>
    <property type="match status" value="1"/>
</dbReference>
<dbReference type="PROSITE" id="PS01175">
    <property type="entry name" value="RIBONUCLEASE_II"/>
    <property type="match status" value="1"/>
</dbReference>
<reference key="1">
    <citation type="journal article" date="2005" name="Science">
        <title>The transcriptional landscape of the mammalian genome.</title>
        <authorList>
            <person name="Carninci P."/>
            <person name="Kasukawa T."/>
            <person name="Katayama S."/>
            <person name="Gough J."/>
            <person name="Frith M.C."/>
            <person name="Maeda N."/>
            <person name="Oyama R."/>
            <person name="Ravasi T."/>
            <person name="Lenhard B."/>
            <person name="Wells C."/>
            <person name="Kodzius R."/>
            <person name="Shimokawa K."/>
            <person name="Bajic V.B."/>
            <person name="Brenner S.E."/>
            <person name="Batalov S."/>
            <person name="Forrest A.R."/>
            <person name="Zavolan M."/>
            <person name="Davis M.J."/>
            <person name="Wilming L.G."/>
            <person name="Aidinis V."/>
            <person name="Allen J.E."/>
            <person name="Ambesi-Impiombato A."/>
            <person name="Apweiler R."/>
            <person name="Aturaliya R.N."/>
            <person name="Bailey T.L."/>
            <person name="Bansal M."/>
            <person name="Baxter L."/>
            <person name="Beisel K.W."/>
            <person name="Bersano T."/>
            <person name="Bono H."/>
            <person name="Chalk A.M."/>
            <person name="Chiu K.P."/>
            <person name="Choudhary V."/>
            <person name="Christoffels A."/>
            <person name="Clutterbuck D.R."/>
            <person name="Crowe M.L."/>
            <person name="Dalla E."/>
            <person name="Dalrymple B.P."/>
            <person name="de Bono B."/>
            <person name="Della Gatta G."/>
            <person name="di Bernardo D."/>
            <person name="Down T."/>
            <person name="Engstrom P."/>
            <person name="Fagiolini M."/>
            <person name="Faulkner G."/>
            <person name="Fletcher C.F."/>
            <person name="Fukushima T."/>
            <person name="Furuno M."/>
            <person name="Futaki S."/>
            <person name="Gariboldi M."/>
            <person name="Georgii-Hemming P."/>
            <person name="Gingeras T.R."/>
            <person name="Gojobori T."/>
            <person name="Green R.E."/>
            <person name="Gustincich S."/>
            <person name="Harbers M."/>
            <person name="Hayashi Y."/>
            <person name="Hensch T.K."/>
            <person name="Hirokawa N."/>
            <person name="Hill D."/>
            <person name="Huminiecki L."/>
            <person name="Iacono M."/>
            <person name="Ikeo K."/>
            <person name="Iwama A."/>
            <person name="Ishikawa T."/>
            <person name="Jakt M."/>
            <person name="Kanapin A."/>
            <person name="Katoh M."/>
            <person name="Kawasawa Y."/>
            <person name="Kelso J."/>
            <person name="Kitamura H."/>
            <person name="Kitano H."/>
            <person name="Kollias G."/>
            <person name="Krishnan S.P."/>
            <person name="Kruger A."/>
            <person name="Kummerfeld S.K."/>
            <person name="Kurochkin I.V."/>
            <person name="Lareau L.F."/>
            <person name="Lazarevic D."/>
            <person name="Lipovich L."/>
            <person name="Liu J."/>
            <person name="Liuni S."/>
            <person name="McWilliam S."/>
            <person name="Madan Babu M."/>
            <person name="Madera M."/>
            <person name="Marchionni L."/>
            <person name="Matsuda H."/>
            <person name="Matsuzawa S."/>
            <person name="Miki H."/>
            <person name="Mignone F."/>
            <person name="Miyake S."/>
            <person name="Morris K."/>
            <person name="Mottagui-Tabar S."/>
            <person name="Mulder N."/>
            <person name="Nakano N."/>
            <person name="Nakauchi H."/>
            <person name="Ng P."/>
            <person name="Nilsson R."/>
            <person name="Nishiguchi S."/>
            <person name="Nishikawa S."/>
            <person name="Nori F."/>
            <person name="Ohara O."/>
            <person name="Okazaki Y."/>
            <person name="Orlando V."/>
            <person name="Pang K.C."/>
            <person name="Pavan W.J."/>
            <person name="Pavesi G."/>
            <person name="Pesole G."/>
            <person name="Petrovsky N."/>
            <person name="Piazza S."/>
            <person name="Reed J."/>
            <person name="Reid J.F."/>
            <person name="Ring B.Z."/>
            <person name="Ringwald M."/>
            <person name="Rost B."/>
            <person name="Ruan Y."/>
            <person name="Salzberg S.L."/>
            <person name="Sandelin A."/>
            <person name="Schneider C."/>
            <person name="Schoenbach C."/>
            <person name="Sekiguchi K."/>
            <person name="Semple C.A."/>
            <person name="Seno S."/>
            <person name="Sessa L."/>
            <person name="Sheng Y."/>
            <person name="Shibata Y."/>
            <person name="Shimada H."/>
            <person name="Shimada K."/>
            <person name="Silva D."/>
            <person name="Sinclair B."/>
            <person name="Sperling S."/>
            <person name="Stupka E."/>
            <person name="Sugiura K."/>
            <person name="Sultana R."/>
            <person name="Takenaka Y."/>
            <person name="Taki K."/>
            <person name="Tammoja K."/>
            <person name="Tan S.L."/>
            <person name="Tang S."/>
            <person name="Taylor M.S."/>
            <person name="Tegner J."/>
            <person name="Teichmann S.A."/>
            <person name="Ueda H.R."/>
            <person name="van Nimwegen E."/>
            <person name="Verardo R."/>
            <person name="Wei C.L."/>
            <person name="Yagi K."/>
            <person name="Yamanishi H."/>
            <person name="Zabarovsky E."/>
            <person name="Zhu S."/>
            <person name="Zimmer A."/>
            <person name="Hide W."/>
            <person name="Bult C."/>
            <person name="Grimmond S.M."/>
            <person name="Teasdale R.D."/>
            <person name="Liu E.T."/>
            <person name="Brusic V."/>
            <person name="Quackenbush J."/>
            <person name="Wahlestedt C."/>
            <person name="Mattick J.S."/>
            <person name="Hume D.A."/>
            <person name="Kai C."/>
            <person name="Sasaki D."/>
            <person name="Tomaru Y."/>
            <person name="Fukuda S."/>
            <person name="Kanamori-Katayama M."/>
            <person name="Suzuki M."/>
            <person name="Aoki J."/>
            <person name="Arakawa T."/>
            <person name="Iida J."/>
            <person name="Imamura K."/>
            <person name="Itoh M."/>
            <person name="Kato T."/>
            <person name="Kawaji H."/>
            <person name="Kawagashira N."/>
            <person name="Kawashima T."/>
            <person name="Kojima M."/>
            <person name="Kondo S."/>
            <person name="Konno H."/>
            <person name="Nakano K."/>
            <person name="Ninomiya N."/>
            <person name="Nishio T."/>
            <person name="Okada M."/>
            <person name="Plessy C."/>
            <person name="Shibata K."/>
            <person name="Shiraki T."/>
            <person name="Suzuki S."/>
            <person name="Tagami M."/>
            <person name="Waki K."/>
            <person name="Watahiki A."/>
            <person name="Okamura-Oho Y."/>
            <person name="Suzuki H."/>
            <person name="Kawai J."/>
            <person name="Hayashizaki Y."/>
        </authorList>
    </citation>
    <scope>NUCLEOTIDE SEQUENCE [LARGE SCALE MRNA] OF 1-267 AND 272-958</scope>
    <source>
        <strain>C57BL/6J</strain>
        <tissue>Medulla oblongata</tissue>
    </source>
</reference>
<reference key="2">
    <citation type="journal article" date="2003" name="DNA Res.">
        <title>Prediction of the coding sequences of mouse homologues of KIAA gene: III. The complete nucleotide sequences of 500 mouse KIAA-homologous cDNAs identified by screening of terminal sequences of cDNA clones randomly sampled from size-fractionated libraries.</title>
        <authorList>
            <person name="Okazaki N."/>
            <person name="Kikuno R."/>
            <person name="Ohara R."/>
            <person name="Inamoto S."/>
            <person name="Koseki H."/>
            <person name="Hiraoka S."/>
            <person name="Saga Y."/>
            <person name="Nagase T."/>
            <person name="Ohara O."/>
            <person name="Koga H."/>
        </authorList>
    </citation>
    <scope>NUCLEOTIDE SEQUENCE [LARGE SCALE MRNA] OF 131-588</scope>
    <source>
        <tissue>Embryonic tail</tissue>
    </source>
</reference>
<reference key="3">
    <citation type="journal article" date="2010" name="Cell">
        <title>A tissue-specific atlas of mouse protein phosphorylation and expression.</title>
        <authorList>
            <person name="Huttlin E.L."/>
            <person name="Jedrychowski M.P."/>
            <person name="Elias J.E."/>
            <person name="Goswami T."/>
            <person name="Rad R."/>
            <person name="Beausoleil S.A."/>
            <person name="Villen J."/>
            <person name="Haas W."/>
            <person name="Sowa M.E."/>
            <person name="Gygi S.P."/>
        </authorList>
    </citation>
    <scope>PHOSPHORYLATION [LARGE SCALE ANALYSIS] AT SER-215</scope>
    <scope>IDENTIFICATION BY MASS SPECTROMETRY [LARGE SCALE ANALYSIS]</scope>
    <source>
        <tissue>Brown adipose tissue</tissue>
        <tissue>Heart</tissue>
        <tissue>Kidney</tissue>
        <tissue>Liver</tissue>
        <tissue>Lung</tissue>
        <tissue>Pancreas</tissue>
        <tissue>Spleen</tissue>
        <tissue>Testis</tissue>
    </source>
</reference>
<proteinExistence type="evidence at protein level"/>
<feature type="chain" id="PRO_0000314757" description="Exosome complex exonuclease RRP44">
    <location>
        <begin position="1"/>
        <end position="958"/>
    </location>
</feature>
<feature type="domain" description="PINc">
    <location>
        <begin position="64"/>
        <end position="182"/>
    </location>
</feature>
<feature type="domain" description="CSD1" evidence="2">
    <location>
        <begin position="227"/>
        <end position="319"/>
    </location>
</feature>
<feature type="domain" description="CSD2" evidence="2">
    <location>
        <begin position="372"/>
        <end position="438"/>
    </location>
</feature>
<feature type="domain" description="RNB" evidence="2">
    <location>
        <begin position="467"/>
        <end position="792"/>
    </location>
</feature>
<feature type="modified residue" description="N-acetylmethionine" evidence="1">
    <location>
        <position position="1"/>
    </location>
</feature>
<feature type="modified residue" description="N6-acetyllysine" evidence="1">
    <location>
        <position position="18"/>
    </location>
</feature>
<feature type="modified residue" description="Phosphoserine" evidence="4">
    <location>
        <position position="215"/>
    </location>
</feature>
<feature type="sequence conflict" description="In Ref. 2; BAC98069." evidence="3" ref="2">
    <original>ASL</original>
    <variation>VSV</variation>
    <location>
        <begin position="586"/>
        <end position="588"/>
    </location>
</feature>
<evidence type="ECO:0000250" key="1">
    <source>
        <dbReference type="UniProtKB" id="Q9Y2L1"/>
    </source>
</evidence>
<evidence type="ECO:0000255" key="2"/>
<evidence type="ECO:0000305" key="3"/>
<evidence type="ECO:0007744" key="4">
    <source>
    </source>
</evidence>
<protein>
    <recommendedName>
        <fullName>Exosome complex exonuclease RRP44</fullName>
        <ecNumber>3.1.13.-</ecNumber>
        <ecNumber>3.1.26.-</ecNumber>
    </recommendedName>
    <alternativeName>
        <fullName>Protein DIS3 homolog</fullName>
    </alternativeName>
    <alternativeName>
        <fullName>Ribosomal RNA-processing protein 44</fullName>
    </alternativeName>
</protein>
<accession>Q9CSH3</accession>
<accession>Q6ZQ07</accession>
<accession>Q8C074</accession>
<organism>
    <name type="scientific">Mus musculus</name>
    <name type="common">Mouse</name>
    <dbReference type="NCBI Taxonomy" id="10090"/>
    <lineage>
        <taxon>Eukaryota</taxon>
        <taxon>Metazoa</taxon>
        <taxon>Chordata</taxon>
        <taxon>Craniata</taxon>
        <taxon>Vertebrata</taxon>
        <taxon>Euteleostomi</taxon>
        <taxon>Mammalia</taxon>
        <taxon>Eutheria</taxon>
        <taxon>Euarchontoglires</taxon>
        <taxon>Glires</taxon>
        <taxon>Rodentia</taxon>
        <taxon>Myomorpha</taxon>
        <taxon>Muroidea</taxon>
        <taxon>Muridae</taxon>
        <taxon>Murinae</taxon>
        <taxon>Mus</taxon>
        <taxon>Mus</taxon>
    </lineage>
</organism>
<comment type="function">
    <text evidence="1">Putative catalytic component of the RNA exosome complex which has 3'-&gt;5' exoribonuclease activity and participates in a multitude of cellular RNA processing and degradation events. In the nucleus, the RNA exosome complex is involved in proper maturation of stable RNA species such as rRNA, snRNA and snoRNA, in the elimination of RNA processing by-products and non-coding 'pervasive' transcripts, such as antisense RNA species and promoter-upstream transcripts (PROMPTs), and of mRNAs with processing defects, thereby limiting or excluding their export to the cytoplasm. The RNA exosome may be involved in Ig class switch recombination (CSR) and/or Ig variable region somatic hypermutation (SHM) by targeting AICDA deamination activity to transcribed dsDNA substrates. In the cytoplasm, the RNA exosome complex is involved in general mRNA turnover and specifically degrades inherently unstable mRNAs containing AU-rich elements (AREs) within their 3' untranslated regions, and in RNA surveillance pathways, preventing translation of aberrant mRNAs. It seems to be involved in degradation of histone mRNA. DIS3 has both 3'-5' exonuclease and endonuclease activities.</text>
</comment>
<comment type="cofactor">
    <cofactor evidence="1">
        <name>Mg(2+)</name>
        <dbReference type="ChEBI" id="CHEBI:18420"/>
    </cofactor>
    <cofactor evidence="1">
        <name>Mn(2+)</name>
        <dbReference type="ChEBI" id="CHEBI:29035"/>
    </cofactor>
</comment>
<comment type="subunit">
    <text evidence="1">Component of the RNA exosome complex; within the complex interacts with EXOSC4, EXOSC7 and EXOSC9 of the exosome core complex (Exo-9) (By similarity). The catalytically inactive RNA exosome core complex (Exo-9) associates with the catalytic subunit EXOSC10/RRP6 (By similarity). Exo-9 may associate with DIS3 to form the nucleolar exosome complex, or DIS3L to form the cytoplasmic exosome complex (By similarity). Exo-9 is formed by a hexameric base ring consisting of the heterodimers EXOSC4-EXOSC9, EXOSC5-EXOSC8 and EXOSC6-EXOSC7, and a cap ring consisting of EXOSC1, EXOSC2 and EXOSC3; DIS3 associates with the base ring of Exo-9 (By similarity). The RNA exosome complex associates with cofactors C1D/RRP47, MPHOSPH6/MPP6 and MTREX/MTR4. Interacts with DHX34; the interaction is RNA-independent (By similarity).</text>
</comment>
<comment type="subcellular location">
    <subcellularLocation>
        <location evidence="1">Cytoplasm</location>
    </subcellularLocation>
    <subcellularLocation>
        <location evidence="1">Nucleus</location>
        <location evidence="1">Nucleolus</location>
    </subcellularLocation>
    <subcellularLocation>
        <location evidence="1">Nucleus</location>
        <location evidence="1">Nucleoplasm</location>
    </subcellularLocation>
    <subcellularLocation>
        <location evidence="1">Nucleus</location>
    </subcellularLocation>
    <text evidence="1">Predominantly located in the nucleus. According to, found in the nucleolus. According to, excluded from nucleolus supporting the existence of a nucleolar RNA exosome complex devoid of DIS3.</text>
</comment>
<comment type="similarity">
    <text evidence="3">Belongs to the RNR ribonuclease family.</text>
</comment>
<comment type="sequence caution" evidence="3">
    <conflict type="miscellaneous discrepancy">
        <sequence resource="EMBL-CDS" id="BAC98069"/>
    </conflict>
    <text>Incompletely spliced mRNA.</text>
</comment>
<keyword id="KW-0007">Acetylation</keyword>
<keyword id="KW-0963">Cytoplasm</keyword>
<keyword id="KW-0255">Endonuclease</keyword>
<keyword id="KW-0269">Exonuclease</keyword>
<keyword id="KW-0271">Exosome</keyword>
<keyword id="KW-0378">Hydrolase</keyword>
<keyword id="KW-0460">Magnesium</keyword>
<keyword id="KW-0464">Manganese</keyword>
<keyword id="KW-0540">Nuclease</keyword>
<keyword id="KW-0539">Nucleus</keyword>
<keyword id="KW-0597">Phosphoprotein</keyword>
<keyword id="KW-1185">Reference proteome</keyword>
<keyword id="KW-0694">RNA-binding</keyword>
<keyword id="KW-0698">rRNA processing</keyword>
<gene>
    <name type="primary">Dis3</name>
    <name type="synonym">Kiaa1008</name>
    <name type="synonym">Rrp44</name>
</gene>